<proteinExistence type="inferred from homology"/>
<keyword id="KW-0560">Oxidoreductase</keyword>
<keyword id="KW-0670">Pyruvate</keyword>
<keyword id="KW-1185">Reference proteome</keyword>
<keyword id="KW-0786">Thiamine pyrophosphate</keyword>
<protein>
    <recommendedName>
        <fullName>Pyruvate dehydrogenase E1 component</fullName>
        <shortName>PDH E1 component</shortName>
        <ecNumber>1.2.4.1</ecNumber>
    </recommendedName>
</protein>
<organism>
    <name type="scientific">Pseudomonas aeruginosa (strain ATCC 15692 / DSM 22644 / CIP 104116 / JCM 14847 / LMG 12228 / 1C / PRS 101 / PAO1)</name>
    <dbReference type="NCBI Taxonomy" id="208964"/>
    <lineage>
        <taxon>Bacteria</taxon>
        <taxon>Pseudomonadati</taxon>
        <taxon>Pseudomonadota</taxon>
        <taxon>Gammaproteobacteria</taxon>
        <taxon>Pseudomonadales</taxon>
        <taxon>Pseudomonadaceae</taxon>
        <taxon>Pseudomonas</taxon>
    </lineage>
</organism>
<dbReference type="EC" id="1.2.4.1"/>
<dbReference type="EMBL" id="U47920">
    <property type="protein sequence ID" value="AAC45353.1"/>
    <property type="molecule type" value="Genomic_DNA"/>
</dbReference>
<dbReference type="EMBL" id="AE004091">
    <property type="protein sequence ID" value="AAG08400.1"/>
    <property type="molecule type" value="Genomic_DNA"/>
</dbReference>
<dbReference type="PIR" id="G83018">
    <property type="entry name" value="G83018"/>
</dbReference>
<dbReference type="RefSeq" id="NP_253702.1">
    <property type="nucleotide sequence ID" value="NC_002516.2"/>
</dbReference>
<dbReference type="RefSeq" id="WP_003114556.1">
    <property type="nucleotide sequence ID" value="NZ_QZGE01000002.1"/>
</dbReference>
<dbReference type="SMR" id="Q59637"/>
<dbReference type="FunCoup" id="Q59637">
    <property type="interactions" value="573"/>
</dbReference>
<dbReference type="STRING" id="208964.PA5015"/>
<dbReference type="PaxDb" id="208964-PA5015"/>
<dbReference type="GeneID" id="881326"/>
<dbReference type="KEGG" id="pae:PA5015"/>
<dbReference type="PATRIC" id="fig|208964.12.peg.5255"/>
<dbReference type="PseudoCAP" id="PA5015"/>
<dbReference type="HOGENOM" id="CLU_009154_2_0_6"/>
<dbReference type="InParanoid" id="Q59637"/>
<dbReference type="OrthoDB" id="9759664at2"/>
<dbReference type="PhylomeDB" id="Q59637"/>
<dbReference type="BioCyc" id="PAER208964:G1FZ6-5131-MONOMER"/>
<dbReference type="Proteomes" id="UP000002438">
    <property type="component" value="Chromosome"/>
</dbReference>
<dbReference type="GO" id="GO:0004739">
    <property type="term" value="F:pyruvate dehydrogenase (acetyl-transferring) activity"/>
    <property type="evidence" value="ECO:0007669"/>
    <property type="project" value="UniProtKB-EC"/>
</dbReference>
<dbReference type="CDD" id="cd02017">
    <property type="entry name" value="TPP_E1_EcPDC_like"/>
    <property type="match status" value="1"/>
</dbReference>
<dbReference type="FunFam" id="3.40.50.970:FF:000011">
    <property type="entry name" value="Pyruvate dehydrogenase E1 component"/>
    <property type="match status" value="1"/>
</dbReference>
<dbReference type="Gene3D" id="3.40.50.920">
    <property type="match status" value="1"/>
</dbReference>
<dbReference type="Gene3D" id="3.40.50.970">
    <property type="match status" value="2"/>
</dbReference>
<dbReference type="InterPro" id="IPR035807">
    <property type="entry name" value="PDC_E1_N"/>
</dbReference>
<dbReference type="InterPro" id="IPR051157">
    <property type="entry name" value="PDH/Transketolase"/>
</dbReference>
<dbReference type="InterPro" id="IPR004660">
    <property type="entry name" value="PDH_E1"/>
</dbReference>
<dbReference type="InterPro" id="IPR041621">
    <property type="entry name" value="PDH_E1_M"/>
</dbReference>
<dbReference type="InterPro" id="IPR029061">
    <property type="entry name" value="THDP-binding"/>
</dbReference>
<dbReference type="InterPro" id="IPR009014">
    <property type="entry name" value="Transketo_C/PFOR_II"/>
</dbReference>
<dbReference type="InterPro" id="IPR055152">
    <property type="entry name" value="Transketolase-like_C_2"/>
</dbReference>
<dbReference type="InterPro" id="IPR005474">
    <property type="entry name" value="Transketolase_N"/>
</dbReference>
<dbReference type="NCBIfam" id="TIGR00759">
    <property type="entry name" value="aceE"/>
    <property type="match status" value="1"/>
</dbReference>
<dbReference type="PANTHER" id="PTHR43825">
    <property type="entry name" value="PYRUVATE DEHYDROGENASE E1 COMPONENT"/>
    <property type="match status" value="1"/>
</dbReference>
<dbReference type="PANTHER" id="PTHR43825:SF3">
    <property type="entry name" value="PYRUVATE DEHYDROGENASE E1 COMPONENT"/>
    <property type="match status" value="1"/>
</dbReference>
<dbReference type="Pfam" id="PF17831">
    <property type="entry name" value="PDH_E1_M"/>
    <property type="match status" value="1"/>
</dbReference>
<dbReference type="Pfam" id="PF22613">
    <property type="entry name" value="Transketolase_C_1"/>
    <property type="match status" value="1"/>
</dbReference>
<dbReference type="Pfam" id="PF00456">
    <property type="entry name" value="Transketolase_N"/>
    <property type="match status" value="1"/>
</dbReference>
<dbReference type="PIRSF" id="PIRSF000156">
    <property type="entry name" value="Pyruvate_dh_E1"/>
    <property type="match status" value="1"/>
</dbReference>
<dbReference type="SUPFAM" id="SSF52518">
    <property type="entry name" value="Thiamin diphosphate-binding fold (THDP-binding)"/>
    <property type="match status" value="2"/>
</dbReference>
<dbReference type="SUPFAM" id="SSF52922">
    <property type="entry name" value="TK C-terminal domain-like"/>
    <property type="match status" value="1"/>
</dbReference>
<evidence type="ECO:0000250" key="1"/>
<evidence type="ECO:0000305" key="2"/>
<accession>Q59637</accession>
<accession>Q9HUF3</accession>
<reference key="1">
    <citation type="journal article" date="1997" name="J. Bacteriol.">
        <title>Sequences and expression of pyruvate dehydrogenase genes from Pseudomonas aeruginosa.</title>
        <authorList>
            <person name="Rae J.L."/>
            <person name="Cutfield J.F."/>
            <person name="Lamont I.L."/>
        </authorList>
    </citation>
    <scope>NUCLEOTIDE SEQUENCE [GENOMIC DNA]</scope>
    <source>
        <strain>PAO</strain>
    </source>
</reference>
<reference key="2">
    <citation type="journal article" date="2000" name="Nature">
        <title>Complete genome sequence of Pseudomonas aeruginosa PAO1, an opportunistic pathogen.</title>
        <authorList>
            <person name="Stover C.K."/>
            <person name="Pham X.-Q.T."/>
            <person name="Erwin A.L."/>
            <person name="Mizoguchi S.D."/>
            <person name="Warrener P."/>
            <person name="Hickey M.J."/>
            <person name="Brinkman F.S.L."/>
            <person name="Hufnagle W.O."/>
            <person name="Kowalik D.J."/>
            <person name="Lagrou M."/>
            <person name="Garber R.L."/>
            <person name="Goltry L."/>
            <person name="Tolentino E."/>
            <person name="Westbrock-Wadman S."/>
            <person name="Yuan Y."/>
            <person name="Brody L.L."/>
            <person name="Coulter S.N."/>
            <person name="Folger K.R."/>
            <person name="Kas A."/>
            <person name="Larbig K."/>
            <person name="Lim R.M."/>
            <person name="Smith K.A."/>
            <person name="Spencer D.H."/>
            <person name="Wong G.K.-S."/>
            <person name="Wu Z."/>
            <person name="Paulsen I.T."/>
            <person name="Reizer J."/>
            <person name="Saier M.H. Jr."/>
            <person name="Hancock R.E.W."/>
            <person name="Lory S."/>
            <person name="Olson M.V."/>
        </authorList>
    </citation>
    <scope>NUCLEOTIDE SEQUENCE [LARGE SCALE GENOMIC DNA]</scope>
    <source>
        <strain>ATCC 15692 / DSM 22644 / CIP 104116 / JCM 14847 / LMG 12228 / 1C / PRS 101 / PAO1</strain>
    </source>
</reference>
<name>ODP1_PSEAE</name>
<comment type="function">
    <text evidence="1">Component of the pyruvate dehydrogenase (PDH) complex, that catalyzes the overall conversion of pyruvate to acetyl-CoA and CO(2).</text>
</comment>
<comment type="catalytic activity">
    <reaction>
        <text>N(6)-[(R)-lipoyl]-L-lysyl-[protein] + pyruvate + H(+) = N(6)-[(R)-S(8)-acetyldihydrolipoyl]-L-lysyl-[protein] + CO2</text>
        <dbReference type="Rhea" id="RHEA:19189"/>
        <dbReference type="Rhea" id="RHEA-COMP:10474"/>
        <dbReference type="Rhea" id="RHEA-COMP:10478"/>
        <dbReference type="ChEBI" id="CHEBI:15361"/>
        <dbReference type="ChEBI" id="CHEBI:15378"/>
        <dbReference type="ChEBI" id="CHEBI:16526"/>
        <dbReference type="ChEBI" id="CHEBI:83099"/>
        <dbReference type="ChEBI" id="CHEBI:83111"/>
        <dbReference type="EC" id="1.2.4.1"/>
    </reaction>
</comment>
<comment type="cofactor">
    <cofactor evidence="1">
        <name>thiamine diphosphate</name>
        <dbReference type="ChEBI" id="CHEBI:58937"/>
    </cofactor>
</comment>
<comment type="subunit">
    <text evidence="1">Homodimer. Part of the PDH complex, consisting of multiple copies of pyruvate dehydrogenase (E1), dihydrolipoamide acetyltransferase (E2) and lipoamide dehydrogenase (E3).</text>
</comment>
<gene>
    <name type="primary">aceE</name>
    <name type="synonym">aceA</name>
    <name type="ordered locus">PA5015</name>
</gene>
<sequence>MQDLDPVETQEWLDALESVLDREGEDRAHYLMTRMGELASRSGTQLPYAITTPYRNTIPVTHEARMPGDLFMERRIRSLVRWNALAMVMRANKHDPDLGGHISTFASSATLYDIGFNYFFQAPTDEHGGDLVFFQGHASPGVYARAFLEGRISEEQLENFRQEVDGNGLSSYPHPWLMPDFWQFPTVSMGLGPIQAIYQARFMKYLESRGFIPAGKQKVWCFMGDGECDEPESLGAISLAGREKLDNLIFVINCNLQRLDGPVRGNAKIIQELEGVFRGAEWNVNKVIWGRFWDPLFAKDTAGLLQQRMDEVIDGEYQNYKAKDGAYVREHFFGARPELLEMVKDLSDEEIWKLNRGGHDPYKVYAAYHQAVNHKGQPTVILAKTIKGYGTGSGEAKNIAHNVKKVDVDSLRAFRDKFDIPVKDADLEKLPFYKPEEGSAEAKYLAERRAALGGFMPVRRQKSMSVPVPPLETLKAMLDGSGDREISTTMAFVRIISQLVKDKELGPRIVPIVPDEARTFGMEGMFRQLGIYSSVGQLYEPVDKDQVMFYREDKKGQILEEGINEAGAMSSWIAAGTSYSTHNQPMLPFYIFYSMFGFQRIGDLAWAAGDSRAHGFLIGGTAGRTTLNGEGLQHEDGHSHLLASTIPNCRTYDPTYAYELAVIIREGSRQMIEEQQDIFYYITVMNENYVQPAMPKGAEEGIIKGMYLLEEDKKEAAHHVQLLGSGTILREVEEAAKLLRNDFGIGADVWSVPSFNELRRDGLAVERWNRLHPGQKPKQSYVEECLGGRRGPVIASTDYMKLYAEQIRQWVPSKEYKVLGTDGFGRSDSRKKLRNFFEVDRHWVVLAALEALADRGDIEPKVVAEAIAKYGIDPEKRNPLDC</sequence>
<feature type="chain" id="PRO_0000162247" description="Pyruvate dehydrogenase E1 component">
    <location>
        <begin position="1"/>
        <end position="882"/>
    </location>
</feature>
<feature type="sequence conflict" description="In Ref. 1; AAC45353." evidence="2" ref="1">
    <original>IRS</original>
    <variation>DPLP</variation>
    <location>
        <begin position="76"/>
        <end position="78"/>
    </location>
</feature>
<feature type="sequence conflict" description="In Ref. 1; AAC45353." evidence="2" ref="1">
    <original>EGRISEEQ</original>
    <variation>GRPHQRRNK</variation>
    <location>
        <begin position="149"/>
        <end position="156"/>
    </location>
</feature>
<feature type="sequence conflict" description="In Ref. 1; AAC45353." evidence="2" ref="1">
    <original>NGLSSYPH</original>
    <variation>TACPPIRT</variation>
    <location>
        <begin position="167"/>
        <end position="174"/>
    </location>
</feature>
<feature type="sequence conflict" description="In Ref. 1; AAC45353." evidence="2" ref="1">
    <original>Q</original>
    <variation>H</variation>
    <location>
        <position position="377"/>
    </location>
</feature>
<feature type="sequence conflict" description="In Ref. 1; AAC45353." evidence="2" ref="1">
    <original>G</original>
    <variation>V</variation>
    <location>
        <position position="388"/>
    </location>
</feature>
<feature type="sequence conflict" description="In Ref. 1; AAC45353." evidence="2" ref="1">
    <original>G</original>
    <variation>A</variation>
    <location>
        <position position="392"/>
    </location>
</feature>
<feature type="sequence conflict" description="In Ref. 1; AAC45353." evidence="2" ref="1">
    <location>
        <begin position="408"/>
        <end position="409"/>
    </location>
</feature>
<feature type="sequence conflict" description="In Ref. 1; AAC45353." evidence="2" ref="1">
    <original>A</original>
    <variation>G</variation>
    <location>
        <position position="517"/>
    </location>
</feature>
<feature type="sequence conflict" description="In Ref. 1; AAC45353." evidence="2" ref="1">
    <location>
        <position position="671"/>
    </location>
</feature>
<feature type="sequence conflict" description="In Ref. 1; AAC45353." evidence="2" ref="1">
    <original>R</original>
    <variation>H</variation>
    <location>
        <position position="740"/>
    </location>
</feature>
<feature type="sequence conflict" description="In Ref. 1; AAC45353." evidence="2" ref="1">
    <original>GIG</original>
    <variation>DIV</variation>
    <location>
        <begin position="744"/>
        <end position="746"/>
    </location>
</feature>
<feature type="sequence conflict" description="In Ref. 1; AAC45353." evidence="2" ref="1">
    <original>RDGLAV</original>
    <variation>HDDLTL</variation>
    <location>
        <begin position="760"/>
        <end position="765"/>
    </location>
</feature>
<feature type="sequence conflict" description="In Ref. 1; AAC45353." evidence="2" ref="1">
    <original>GRRG</original>
    <variation>APSR</variation>
    <location>
        <begin position="788"/>
        <end position="791"/>
    </location>
</feature>
<feature type="sequence conflict" description="In Ref. 1; AAC45353." evidence="2" ref="1">
    <location>
        <position position="821"/>
    </location>
</feature>